<organism>
    <name type="scientific">Salmonella paratyphi A (strain ATCC 9150 / SARB42)</name>
    <dbReference type="NCBI Taxonomy" id="295319"/>
    <lineage>
        <taxon>Bacteria</taxon>
        <taxon>Pseudomonadati</taxon>
        <taxon>Pseudomonadota</taxon>
        <taxon>Gammaproteobacteria</taxon>
        <taxon>Enterobacterales</taxon>
        <taxon>Enterobacteriaceae</taxon>
        <taxon>Salmonella</taxon>
    </lineage>
</organism>
<dbReference type="EC" id="7.2.2.20" evidence="1"/>
<dbReference type="EMBL" id="CP000026">
    <property type="protein sequence ID" value="AAV76952.1"/>
    <property type="molecule type" value="Genomic_DNA"/>
</dbReference>
<dbReference type="RefSeq" id="WP_000203023.1">
    <property type="nucleotide sequence ID" value="NC_006511.1"/>
</dbReference>
<dbReference type="SMR" id="Q5PIA5"/>
<dbReference type="KEGG" id="spt:SPA0977"/>
<dbReference type="HOGENOM" id="CLU_000604_1_11_6"/>
<dbReference type="Proteomes" id="UP000008185">
    <property type="component" value="Chromosome"/>
</dbReference>
<dbReference type="GO" id="GO:0005886">
    <property type="term" value="C:plasma membrane"/>
    <property type="evidence" value="ECO:0007669"/>
    <property type="project" value="UniProtKB-SubCell"/>
</dbReference>
<dbReference type="GO" id="GO:0015633">
    <property type="term" value="F:ABC-type zinc transporter activity"/>
    <property type="evidence" value="ECO:0007669"/>
    <property type="project" value="UniProtKB-EC"/>
</dbReference>
<dbReference type="GO" id="GO:0005524">
    <property type="term" value="F:ATP binding"/>
    <property type="evidence" value="ECO:0007669"/>
    <property type="project" value="UniProtKB-KW"/>
</dbReference>
<dbReference type="GO" id="GO:0016887">
    <property type="term" value="F:ATP hydrolysis activity"/>
    <property type="evidence" value="ECO:0007669"/>
    <property type="project" value="InterPro"/>
</dbReference>
<dbReference type="GO" id="GO:0010043">
    <property type="term" value="P:response to zinc ion"/>
    <property type="evidence" value="ECO:0007669"/>
    <property type="project" value="TreeGrafter"/>
</dbReference>
<dbReference type="CDD" id="cd03235">
    <property type="entry name" value="ABC_Metallic_Cations"/>
    <property type="match status" value="1"/>
</dbReference>
<dbReference type="FunFam" id="3.40.50.300:FF:000392">
    <property type="entry name" value="Zinc import ATP-binding protein ZnuC"/>
    <property type="match status" value="1"/>
</dbReference>
<dbReference type="Gene3D" id="3.40.50.300">
    <property type="entry name" value="P-loop containing nucleotide triphosphate hydrolases"/>
    <property type="match status" value="1"/>
</dbReference>
<dbReference type="InterPro" id="IPR003593">
    <property type="entry name" value="AAA+_ATPase"/>
</dbReference>
<dbReference type="InterPro" id="IPR003439">
    <property type="entry name" value="ABC_transporter-like_ATP-bd"/>
</dbReference>
<dbReference type="InterPro" id="IPR050153">
    <property type="entry name" value="Metal_Ion_Import_ABC"/>
</dbReference>
<dbReference type="InterPro" id="IPR027417">
    <property type="entry name" value="P-loop_NTPase"/>
</dbReference>
<dbReference type="NCBIfam" id="NF007090">
    <property type="entry name" value="PRK09544.1"/>
    <property type="match status" value="1"/>
</dbReference>
<dbReference type="PANTHER" id="PTHR42734">
    <property type="entry name" value="METAL TRANSPORT SYSTEM ATP-BINDING PROTEIN TM_0124-RELATED"/>
    <property type="match status" value="1"/>
</dbReference>
<dbReference type="PANTHER" id="PTHR42734:SF9">
    <property type="entry name" value="ZINC IMPORT ATP-BINDING PROTEIN ZNUC"/>
    <property type="match status" value="1"/>
</dbReference>
<dbReference type="Pfam" id="PF00005">
    <property type="entry name" value="ABC_tran"/>
    <property type="match status" value="1"/>
</dbReference>
<dbReference type="SMART" id="SM00382">
    <property type="entry name" value="AAA"/>
    <property type="match status" value="1"/>
</dbReference>
<dbReference type="SUPFAM" id="SSF52540">
    <property type="entry name" value="P-loop containing nucleoside triphosphate hydrolases"/>
    <property type="match status" value="1"/>
</dbReference>
<dbReference type="PROSITE" id="PS50893">
    <property type="entry name" value="ABC_TRANSPORTER_2"/>
    <property type="match status" value="1"/>
</dbReference>
<dbReference type="PROSITE" id="PS51298">
    <property type="entry name" value="ZNUC"/>
    <property type="match status" value="1"/>
</dbReference>
<evidence type="ECO:0000255" key="1">
    <source>
        <dbReference type="HAMAP-Rule" id="MF_01725"/>
    </source>
</evidence>
<protein>
    <recommendedName>
        <fullName evidence="1">Zinc import ATP-binding protein ZnuC</fullName>
        <ecNumber evidence="1">7.2.2.20</ecNumber>
    </recommendedName>
</protein>
<comment type="function">
    <text evidence="1">Part of the ABC transporter complex ZnuABC involved in zinc import. Responsible for energy coupling to the transport system.</text>
</comment>
<comment type="catalytic activity">
    <reaction evidence="1">
        <text>Zn(2+)(out) + ATP(in) + H2O(in) = Zn(2+)(in) + ADP(in) + phosphate(in) + H(+)(in)</text>
        <dbReference type="Rhea" id="RHEA:29795"/>
        <dbReference type="ChEBI" id="CHEBI:15377"/>
        <dbReference type="ChEBI" id="CHEBI:15378"/>
        <dbReference type="ChEBI" id="CHEBI:29105"/>
        <dbReference type="ChEBI" id="CHEBI:30616"/>
        <dbReference type="ChEBI" id="CHEBI:43474"/>
        <dbReference type="ChEBI" id="CHEBI:456216"/>
        <dbReference type="EC" id="7.2.2.20"/>
    </reaction>
</comment>
<comment type="subunit">
    <text evidence="1">The complex is composed of two ATP-binding proteins (ZnuC), two transmembrane proteins (ZnuB) and a solute-binding protein (ZnuA).</text>
</comment>
<comment type="subcellular location">
    <subcellularLocation>
        <location evidence="1">Cell inner membrane</location>
        <topology evidence="1">Peripheral membrane protein</topology>
    </subcellularLocation>
</comment>
<comment type="similarity">
    <text evidence="1">Belongs to the ABC transporter superfamily. Zinc importer (TC 3.A.1.15.5) family.</text>
</comment>
<keyword id="KW-0067">ATP-binding</keyword>
<keyword id="KW-0997">Cell inner membrane</keyword>
<keyword id="KW-1003">Cell membrane</keyword>
<keyword id="KW-0406">Ion transport</keyword>
<keyword id="KW-0472">Membrane</keyword>
<keyword id="KW-0547">Nucleotide-binding</keyword>
<keyword id="KW-1278">Translocase</keyword>
<keyword id="KW-0813">Transport</keyword>
<keyword id="KW-0862">Zinc</keyword>
<keyword id="KW-0864">Zinc transport</keyword>
<proteinExistence type="inferred from homology"/>
<gene>
    <name evidence="1" type="primary">znuC</name>
    <name type="ordered locus">SPA0977</name>
</gene>
<sequence>MTSLVSLENVSVSFGQRRVLSDVSLELSPGKILTLLGPNGAGKSTLVRVVLGLVAPDEGVIKRNGQLRIGYVPQKLYLDTTLPLTVNRFLRLRPGTQKTDILPALKRVQAGHLIDAPMQKLSGGETQRVLLARALLNRPQLLVLDEPTQGVDVNGQVALYDLIDQLRRELDCAVLMVSHDLHLVMAKTDEVLCLNHHICCSGAPEVVSMHPEFISMFGPRGAEQLGIYRHHHNHRHDLQGRIVLRRGNGHS</sequence>
<name>ZNUC_SALPA</name>
<feature type="chain" id="PRO_0000281547" description="Zinc import ATP-binding protein ZnuC">
    <location>
        <begin position="1"/>
        <end position="251"/>
    </location>
</feature>
<feature type="domain" description="ABC transporter" evidence="1">
    <location>
        <begin position="5"/>
        <end position="220"/>
    </location>
</feature>
<feature type="binding site" evidence="1">
    <location>
        <begin position="37"/>
        <end position="44"/>
    </location>
    <ligand>
        <name>ATP</name>
        <dbReference type="ChEBI" id="CHEBI:30616"/>
    </ligand>
</feature>
<accession>Q5PIA5</accession>
<reference key="1">
    <citation type="journal article" date="2004" name="Nat. Genet.">
        <title>Comparison of genome degradation in Paratyphi A and Typhi, human-restricted serovars of Salmonella enterica that cause typhoid.</title>
        <authorList>
            <person name="McClelland M."/>
            <person name="Sanderson K.E."/>
            <person name="Clifton S.W."/>
            <person name="Latreille P."/>
            <person name="Porwollik S."/>
            <person name="Sabo A."/>
            <person name="Meyer R."/>
            <person name="Bieri T."/>
            <person name="Ozersky P."/>
            <person name="McLellan M."/>
            <person name="Harkins C.R."/>
            <person name="Wang C."/>
            <person name="Nguyen C."/>
            <person name="Berghoff A."/>
            <person name="Elliott G."/>
            <person name="Kohlberg S."/>
            <person name="Strong C."/>
            <person name="Du F."/>
            <person name="Carter J."/>
            <person name="Kremizki C."/>
            <person name="Layman D."/>
            <person name="Leonard S."/>
            <person name="Sun H."/>
            <person name="Fulton L."/>
            <person name="Nash W."/>
            <person name="Miner T."/>
            <person name="Minx P."/>
            <person name="Delehaunty K."/>
            <person name="Fronick C."/>
            <person name="Magrini V."/>
            <person name="Nhan M."/>
            <person name="Warren W."/>
            <person name="Florea L."/>
            <person name="Spieth J."/>
            <person name="Wilson R.K."/>
        </authorList>
    </citation>
    <scope>NUCLEOTIDE SEQUENCE [LARGE SCALE GENOMIC DNA]</scope>
    <source>
        <strain>ATCC 9150 / SARB42</strain>
    </source>
</reference>